<feature type="chain" id="PRO_0000432563" description="Isocitrate lyase 2">
    <location>
        <begin position="1"/>
        <end position="766"/>
    </location>
</feature>
<feature type="active site" description="Proton acceptor" evidence="1">
    <location>
        <position position="215"/>
    </location>
</feature>
<feature type="binding site" evidence="1">
    <location>
        <begin position="106"/>
        <end position="108"/>
    </location>
    <ligand>
        <name>substrate</name>
    </ligand>
</feature>
<feature type="binding site" evidence="1">
    <location>
        <position position="177"/>
    </location>
    <ligand>
        <name>Mg(2+)</name>
        <dbReference type="ChEBI" id="CHEBI:18420"/>
    </ligand>
</feature>
<feature type="binding site" evidence="1">
    <location>
        <begin position="216"/>
        <end position="217"/>
    </location>
    <ligand>
        <name>substrate</name>
    </ligand>
</feature>
<feature type="binding site" evidence="1">
    <location>
        <position position="252"/>
    </location>
    <ligand>
        <name>substrate</name>
    </ligand>
</feature>
<feature type="binding site" evidence="1">
    <location>
        <begin position="487"/>
        <end position="491"/>
    </location>
    <ligand>
        <name>substrate</name>
    </ligand>
</feature>
<feature type="binding site" evidence="1">
    <location>
        <position position="522"/>
    </location>
    <ligand>
        <name>substrate</name>
    </ligand>
</feature>
<proteinExistence type="inferred from homology"/>
<accession>Q7TZA8</accession>
<accession>A0A1R3XZQ0</accession>
<reference key="1">
    <citation type="journal article" date="2003" name="Proc. Natl. Acad. Sci. U.S.A.">
        <title>The complete genome sequence of Mycobacterium bovis.</title>
        <authorList>
            <person name="Garnier T."/>
            <person name="Eiglmeier K."/>
            <person name="Camus J.-C."/>
            <person name="Medina N."/>
            <person name="Mansoor H."/>
            <person name="Pryor M."/>
            <person name="Duthoy S."/>
            <person name="Grondin S."/>
            <person name="Lacroix C."/>
            <person name="Monsempe C."/>
            <person name="Simon S."/>
            <person name="Harris B."/>
            <person name="Atkin R."/>
            <person name="Doggett J."/>
            <person name="Mayes R."/>
            <person name="Keating L."/>
            <person name="Wheeler P.R."/>
            <person name="Parkhill J."/>
            <person name="Barrell B.G."/>
            <person name="Cole S.T."/>
            <person name="Gordon S.V."/>
            <person name="Hewinson R.G."/>
        </authorList>
    </citation>
    <scope>NUCLEOTIDE SEQUENCE [LARGE SCALE GENOMIC DNA]</scope>
    <source>
        <strain>ATCC BAA-935 / AF2122/97</strain>
    </source>
</reference>
<reference key="2">
    <citation type="journal article" date="2017" name="Genome Announc.">
        <title>Updated reference genome sequence and annotation of Mycobacterium bovis AF2122/97.</title>
        <authorList>
            <person name="Malone K.M."/>
            <person name="Farrell D."/>
            <person name="Stuber T.P."/>
            <person name="Schubert O.T."/>
            <person name="Aebersold R."/>
            <person name="Robbe-Austerman S."/>
            <person name="Gordon S.V."/>
        </authorList>
    </citation>
    <scope>NUCLEOTIDE SEQUENCE [LARGE SCALE GENOMIC DNA]</scope>
    <scope>GENOME REANNOTATION</scope>
    <source>
        <strain>ATCC BAA-935 / AF2122/97</strain>
    </source>
</reference>
<protein>
    <recommendedName>
        <fullName evidence="2">Isocitrate lyase 2</fullName>
        <shortName evidence="2">ICL2</shortName>
        <ecNumber evidence="2">4.1.3.1</ecNumber>
    </recommendedName>
    <alternativeName>
        <fullName evidence="2">Isocitrase</fullName>
    </alternativeName>
    <alternativeName>
        <fullName evidence="2">Isocitratase</fullName>
    </alternativeName>
</protein>
<evidence type="ECO:0000250" key="1">
    <source>
        <dbReference type="UniProtKB" id="P9WKK7"/>
    </source>
</evidence>
<evidence type="ECO:0000250" key="2">
    <source>
        <dbReference type="UniProtKB" id="Q8VJU4"/>
    </source>
</evidence>
<evidence type="ECO:0000305" key="3"/>
<organism>
    <name type="scientific">Mycobacterium bovis (strain ATCC BAA-935 / AF2122/97)</name>
    <dbReference type="NCBI Taxonomy" id="233413"/>
    <lineage>
        <taxon>Bacteria</taxon>
        <taxon>Bacillati</taxon>
        <taxon>Actinomycetota</taxon>
        <taxon>Actinomycetes</taxon>
        <taxon>Mycobacteriales</taxon>
        <taxon>Mycobacteriaceae</taxon>
        <taxon>Mycobacterium</taxon>
        <taxon>Mycobacterium tuberculosis complex</taxon>
    </lineage>
</organism>
<sequence>MAIAETDTEVHTPFEQDFEKDVAATQRYFDSSRFAGIIRLYTARQVVEQRGTIPVDHIVAREAAGAFYERLRELFAARKSITTFGPYSPGQAVSMKRMGIEAIYLGGWATSAKGSSTEDPGPDLASYPLSQVPDDAAVLVRALLTADRNQHYLRLQMSERQRAATPAYDFRPFIIADADTGHGGDPHVRNLIRRFVEVGVPGYHIEDQRPGTKKCGHQGGKVLVPSDEQIKRLNAARFQLDIMRVPGIIVARTDAEAANLIDSRADERDQPFLLGATKLDVPSYKSCFLAMVRRFYELGVKELNGHLLYALGDSEYAAAGGWLERQGIFGLVSDAVNAWREDGQQSIDGIFDQVESRFVAAWEDDAGLMTYGEAVADVLEFGQSEGEPIGMAPEEWRAFAARASLHAARAKAKELGADPPWDCELAKTPEGYYQIRGGIPYAIAKSLAAAPFADILWMETKTADLADARQFAEAIHAEFPDQMLAYNLSPSFNWDTTGMTDEEMRRFPEELGKMGFVFNFITYGGHQIDGVAAEEFATALRQDGMLALARLQRKMRLVESPYRTPQTLVGGPRSDAALAASSGRTATTKAMGKGSTQHQHLVQTEVPRKLLEEWLAMWSGHYQLKDKLRVQLRPQRAGSEVLELGIHGESDDKLANVIFQPIQDRRGRTILLVRDQNTFGAELRQKRLMTLIHLWLVHRFKAQAVHYVTPTDDNLYQTSKMKSHGIFTEVNQEVGEIIVAEVNHPRIAELLTPDRVALRKLITKEA</sequence>
<dbReference type="EC" id="4.1.3.1" evidence="2"/>
<dbReference type="EMBL" id="LT708304">
    <property type="protein sequence ID" value="SIU00553.1"/>
    <property type="molecule type" value="Genomic_DNA"/>
</dbReference>
<dbReference type="RefSeq" id="NP_855601.1">
    <property type="nucleotide sequence ID" value="NC_002945.3"/>
</dbReference>
<dbReference type="RefSeq" id="WP_003409584.1">
    <property type="nucleotide sequence ID" value="NC_002945.4"/>
</dbReference>
<dbReference type="SMR" id="Q7TZA8"/>
<dbReference type="KEGG" id="mbo:BQ2027_MB1950"/>
<dbReference type="PATRIC" id="fig|233413.5.peg.2139"/>
<dbReference type="UniPathway" id="UPA00703">
    <property type="reaction ID" value="UER00719"/>
</dbReference>
<dbReference type="Proteomes" id="UP000001419">
    <property type="component" value="Chromosome"/>
</dbReference>
<dbReference type="GO" id="GO:0004451">
    <property type="term" value="F:isocitrate lyase activity"/>
    <property type="evidence" value="ECO:0007669"/>
    <property type="project" value="UniProtKB-EC"/>
</dbReference>
<dbReference type="GO" id="GO:0046872">
    <property type="term" value="F:metal ion binding"/>
    <property type="evidence" value="ECO:0007669"/>
    <property type="project" value="UniProtKB-KW"/>
</dbReference>
<dbReference type="GO" id="GO:0006097">
    <property type="term" value="P:glyoxylate cycle"/>
    <property type="evidence" value="ECO:0007669"/>
    <property type="project" value="UniProtKB-UniPathway"/>
</dbReference>
<dbReference type="GO" id="GO:0006099">
    <property type="term" value="P:tricarboxylic acid cycle"/>
    <property type="evidence" value="ECO:0007669"/>
    <property type="project" value="UniProtKB-KW"/>
</dbReference>
<dbReference type="CDD" id="cd00377">
    <property type="entry name" value="ICL_PEPM"/>
    <property type="match status" value="1"/>
</dbReference>
<dbReference type="FunFam" id="3.20.20.60:FF:000024">
    <property type="entry name" value="Isocitrate lyase"/>
    <property type="match status" value="1"/>
</dbReference>
<dbReference type="Gene3D" id="1.10.10.850">
    <property type="match status" value="1"/>
</dbReference>
<dbReference type="Gene3D" id="3.20.20.60">
    <property type="entry name" value="Phosphoenolpyruvate-binding domains"/>
    <property type="match status" value="1"/>
</dbReference>
<dbReference type="InterPro" id="IPR039556">
    <property type="entry name" value="ICL/PEPM"/>
</dbReference>
<dbReference type="InterPro" id="IPR006254">
    <property type="entry name" value="Isocitrate_lyase"/>
</dbReference>
<dbReference type="InterPro" id="IPR018523">
    <property type="entry name" value="Isocitrate_lyase_ph_CS"/>
</dbReference>
<dbReference type="InterPro" id="IPR015813">
    <property type="entry name" value="Pyrv/PenolPyrv_kinase-like_dom"/>
</dbReference>
<dbReference type="InterPro" id="IPR040442">
    <property type="entry name" value="Pyrv_kinase-like_dom_sf"/>
</dbReference>
<dbReference type="PANTHER" id="PTHR21631:SF3">
    <property type="entry name" value="BIFUNCTIONAL GLYOXYLATE CYCLE PROTEIN"/>
    <property type="match status" value="1"/>
</dbReference>
<dbReference type="PANTHER" id="PTHR21631">
    <property type="entry name" value="ISOCITRATE LYASE/MALATE SYNTHASE"/>
    <property type="match status" value="1"/>
</dbReference>
<dbReference type="Pfam" id="PF00463">
    <property type="entry name" value="ICL"/>
    <property type="match status" value="2"/>
</dbReference>
<dbReference type="SUPFAM" id="SSF51621">
    <property type="entry name" value="Phosphoenolpyruvate/pyruvate domain"/>
    <property type="match status" value="1"/>
</dbReference>
<dbReference type="PROSITE" id="PS00161">
    <property type="entry name" value="ISOCITRATE_LYASE"/>
    <property type="match status" value="1"/>
</dbReference>
<name>ACEA2_MYCBO</name>
<gene>
    <name type="primary">aceA</name>
    <name type="ordered locus">BQ2027_MB1950</name>
</gene>
<comment type="function">
    <text evidence="2">Involved in the persistence and virulence of Mycobacterium. Catalyzes the reversible formation of succinate and glyoxylate from isocitrate, a key step of the glyoxylate cycle, which operates as an anaplerotic route for replenishing the tricarboxylic acid cycle during growth on fatty acid substrates.</text>
</comment>
<comment type="catalytic activity">
    <reaction evidence="2">
        <text>D-threo-isocitrate = glyoxylate + succinate</text>
        <dbReference type="Rhea" id="RHEA:13245"/>
        <dbReference type="ChEBI" id="CHEBI:15562"/>
        <dbReference type="ChEBI" id="CHEBI:30031"/>
        <dbReference type="ChEBI" id="CHEBI:36655"/>
        <dbReference type="EC" id="4.1.3.1"/>
    </reaction>
</comment>
<comment type="cofactor">
    <cofactor evidence="1">
        <name>Mg(2+)</name>
        <dbReference type="ChEBI" id="CHEBI:18420"/>
    </cofactor>
</comment>
<comment type="pathway">
    <text evidence="2">Carbohydrate metabolism; glyoxylate cycle; (S)-malate from isocitrate: step 1/2.</text>
</comment>
<comment type="similarity">
    <text evidence="3">Belongs to the isocitrate lyase/PEP mutase superfamily. Isocitrate lyase family.</text>
</comment>
<keyword id="KW-0329">Glyoxylate bypass</keyword>
<keyword id="KW-0456">Lyase</keyword>
<keyword id="KW-0460">Magnesium</keyword>
<keyword id="KW-0479">Metal-binding</keyword>
<keyword id="KW-1185">Reference proteome</keyword>
<keyword id="KW-0816">Tricarboxylic acid cycle</keyword>